<organismHost>
    <name type="scientific">Gallus gallus</name>
    <name type="common">Chicken</name>
    <dbReference type="NCBI Taxonomy" id="9031"/>
</organismHost>
<protein>
    <recommendedName>
        <fullName>Uncharacterized gene 83 protein</fullName>
    </recommendedName>
</protein>
<organism>
    <name type="scientific">Gallid herpesvirus 2 (strain Chicken/Md5/ATCC VR-987)</name>
    <name type="common">GaHV-2</name>
    <name type="synonym">Marek's disease herpesvirus type 1</name>
    <dbReference type="NCBI Taxonomy" id="10389"/>
    <lineage>
        <taxon>Viruses</taxon>
        <taxon>Duplodnaviria</taxon>
        <taxon>Heunggongvirae</taxon>
        <taxon>Peploviricota</taxon>
        <taxon>Herviviricetes</taxon>
        <taxon>Herpesvirales</taxon>
        <taxon>Orthoherpesviridae</taxon>
        <taxon>Alphaherpesvirinae</taxon>
        <taxon>Mardivirus</taxon>
        <taxon>Mardivirus gallidalpha2</taxon>
        <taxon>Gallid alphaherpesvirus 2</taxon>
    </lineage>
</organism>
<proteinExistence type="predicted"/>
<feature type="chain" id="PRO_0000406536" description="Uncharacterized gene 83 protein">
    <location>
        <begin position="1"/>
        <end position="112"/>
    </location>
</feature>
<name>VG83_GAHVM</name>
<accession>Q9DH77</accession>
<keyword id="KW-1185">Reference proteome</keyword>
<dbReference type="EMBL" id="AF243438">
    <property type="protein sequence ID" value="AAG14259.1"/>
    <property type="molecule type" value="Genomic_DNA"/>
</dbReference>
<dbReference type="EMBL" id="AF243438">
    <property type="protein sequence ID" value="AAG14280.1"/>
    <property type="molecule type" value="Genomic_DNA"/>
</dbReference>
<dbReference type="Proteomes" id="UP000008072">
    <property type="component" value="Segment"/>
</dbReference>
<reference key="1">
    <citation type="journal article" date="2000" name="J. Virol.">
        <title>The genome of a very virulent Marek's disease virus.</title>
        <authorList>
            <person name="Tulman E.R."/>
            <person name="Afonso C.L."/>
            <person name="Lu Z."/>
            <person name="Zsak L."/>
            <person name="Rock D.L."/>
            <person name="Kutish G.F."/>
        </authorList>
    </citation>
    <scope>NUCLEOTIDE SEQUENCE [LARGE SCALE GENOMIC DNA]</scope>
</reference>
<sequence length="112" mass="12631">MYPIVRLAMVRGHRVFAARRLDKGPPEWLAYVEKSPRLRQKLPTSCRNQAGCPFLGFRRGANRWWVGRCEGNTEGVAVYDSLWGSRGNGPPMLDHKMWGEGSYGSSAEISMC</sequence>
<gene>
    <name type="primary">MDV83</name>
    <name type="synonym">MDV101</name>
</gene>